<comment type="function">
    <text evidence="1">Involved in the synthesis of meso-diaminopimelate (m-DAP or DL-DAP), required for both lysine and peptidoglycan biosynthesis. Catalyzes the direct conversion of tetrahydrodipicolinate to LL-diaminopimelate.</text>
</comment>
<comment type="catalytic activity">
    <reaction evidence="1">
        <text>(2S,6S)-2,6-diaminopimelate + 2-oxoglutarate = (S)-2,3,4,5-tetrahydrodipicolinate + L-glutamate + H2O + H(+)</text>
        <dbReference type="Rhea" id="RHEA:23988"/>
        <dbReference type="ChEBI" id="CHEBI:15377"/>
        <dbReference type="ChEBI" id="CHEBI:15378"/>
        <dbReference type="ChEBI" id="CHEBI:16810"/>
        <dbReference type="ChEBI" id="CHEBI:16845"/>
        <dbReference type="ChEBI" id="CHEBI:29985"/>
        <dbReference type="ChEBI" id="CHEBI:57609"/>
        <dbReference type="EC" id="2.6.1.83"/>
    </reaction>
</comment>
<comment type="cofactor">
    <cofactor evidence="1">
        <name>pyridoxal 5'-phosphate</name>
        <dbReference type="ChEBI" id="CHEBI:597326"/>
    </cofactor>
</comment>
<comment type="pathway">
    <text evidence="1">Amino-acid biosynthesis; L-lysine biosynthesis via DAP pathway; LL-2,6-diaminopimelate from (S)-tetrahydrodipicolinate (aminotransferase route): step 1/1.</text>
</comment>
<comment type="subunit">
    <text evidence="1">Homodimer.</text>
</comment>
<comment type="similarity">
    <text evidence="1">Belongs to the class-I pyridoxal-phosphate-dependent aminotransferase family. LL-diaminopimelate aminotransferase subfamily.</text>
</comment>
<sequence>MTQINENYLKLKAGYLFPEIGRRVKAYSDANQNAKIIRLGIGDVTLPLAPTIVNAMVDAAKEMGSAGGFHGYGPEQGYSFLIQKIIAHDYTARGVQIAEDEVFVSDGSKCDCGNIQEIFSLDSKIAVVDPVYPVYVDTNVMAGRTGEVGPDGRYANIVYMPATEENNFEPDFPKEKADIIYLCYPNNPTGMVATKARLTEWVNYAKKMGSIILYDSAYESFIQDPEIPKSIYEIPGAKEVAMEFRSFSKTAGFTGTRCAYLVIPKDLKGKTKSGEEVSFNSLWNRRHTTKFNGVSYITQKGAEAVFSAQGQVEIKEQISYYMENAKLIREGLVKAGYTVFGGTNAPYIWLKTPRGLKSWEFFDELLGTAQVVGTPGSGFGPAGEGYFRLSAFGKREDVISAIERIQKM</sequence>
<name>DAPAT_LEPBA</name>
<keyword id="KW-0032">Aminotransferase</keyword>
<keyword id="KW-0663">Pyridoxal phosphate</keyword>
<keyword id="KW-0808">Transferase</keyword>
<organism>
    <name type="scientific">Leptospira biflexa serovar Patoc (strain Patoc 1 / Ames)</name>
    <dbReference type="NCBI Taxonomy" id="355278"/>
    <lineage>
        <taxon>Bacteria</taxon>
        <taxon>Pseudomonadati</taxon>
        <taxon>Spirochaetota</taxon>
        <taxon>Spirochaetia</taxon>
        <taxon>Leptospirales</taxon>
        <taxon>Leptospiraceae</taxon>
        <taxon>Leptospira</taxon>
    </lineage>
</organism>
<accession>B0SEH8</accession>
<evidence type="ECO:0000255" key="1">
    <source>
        <dbReference type="HAMAP-Rule" id="MF_01642"/>
    </source>
</evidence>
<feature type="chain" id="PRO_0000342244" description="LL-diaminopimelate aminotransferase">
    <location>
        <begin position="1"/>
        <end position="408"/>
    </location>
</feature>
<feature type="binding site" evidence="1">
    <location>
        <position position="15"/>
    </location>
    <ligand>
        <name>substrate</name>
    </ligand>
</feature>
<feature type="binding site" evidence="1">
    <location>
        <position position="42"/>
    </location>
    <ligand>
        <name>substrate</name>
    </ligand>
</feature>
<feature type="binding site" evidence="1">
    <location>
        <position position="72"/>
    </location>
    <ligand>
        <name>pyridoxal 5'-phosphate</name>
        <dbReference type="ChEBI" id="CHEBI:597326"/>
    </ligand>
</feature>
<feature type="binding site" evidence="1">
    <location>
        <begin position="108"/>
        <end position="109"/>
    </location>
    <ligand>
        <name>pyridoxal 5'-phosphate</name>
        <dbReference type="ChEBI" id="CHEBI:597326"/>
    </ligand>
</feature>
<feature type="binding site" evidence="1">
    <location>
        <position position="109"/>
    </location>
    <ligand>
        <name>substrate</name>
    </ligand>
</feature>
<feature type="binding site" evidence="1">
    <location>
        <position position="132"/>
    </location>
    <ligand>
        <name>pyridoxal 5'-phosphate</name>
        <dbReference type="ChEBI" id="CHEBI:597326"/>
    </ligand>
</feature>
<feature type="binding site" evidence="1">
    <location>
        <position position="132"/>
    </location>
    <ligand>
        <name>substrate</name>
    </ligand>
</feature>
<feature type="binding site" evidence="1">
    <location>
        <position position="187"/>
    </location>
    <ligand>
        <name>pyridoxal 5'-phosphate</name>
        <dbReference type="ChEBI" id="CHEBI:597326"/>
    </ligand>
</feature>
<feature type="binding site" evidence="1">
    <location>
        <position position="187"/>
    </location>
    <ligand>
        <name>substrate</name>
    </ligand>
</feature>
<feature type="binding site" evidence="1">
    <location>
        <position position="218"/>
    </location>
    <ligand>
        <name>pyridoxal 5'-phosphate</name>
        <dbReference type="ChEBI" id="CHEBI:597326"/>
    </ligand>
</feature>
<feature type="binding site" evidence="1">
    <location>
        <begin position="246"/>
        <end position="248"/>
    </location>
    <ligand>
        <name>pyridoxal 5'-phosphate</name>
        <dbReference type="ChEBI" id="CHEBI:597326"/>
    </ligand>
</feature>
<feature type="binding site" evidence="1">
    <location>
        <position position="257"/>
    </location>
    <ligand>
        <name>pyridoxal 5'-phosphate</name>
        <dbReference type="ChEBI" id="CHEBI:597326"/>
    </ligand>
</feature>
<feature type="binding site" evidence="1">
    <location>
        <position position="292"/>
    </location>
    <ligand>
        <name>pyridoxal 5'-phosphate</name>
        <dbReference type="ChEBI" id="CHEBI:597326"/>
    </ligand>
</feature>
<feature type="binding site" evidence="1">
    <location>
        <position position="292"/>
    </location>
    <ligand>
        <name>substrate</name>
    </ligand>
</feature>
<feature type="binding site" evidence="1">
    <location>
        <position position="388"/>
    </location>
    <ligand>
        <name>substrate</name>
    </ligand>
</feature>
<feature type="modified residue" description="N6-(pyridoxal phosphate)lysine" evidence="1">
    <location>
        <position position="249"/>
    </location>
</feature>
<gene>
    <name evidence="1" type="primary">dapL</name>
    <name type="ordered locus">LBF_0994</name>
</gene>
<dbReference type="EC" id="2.6.1.83" evidence="1"/>
<dbReference type="EMBL" id="CP000777">
    <property type="protein sequence ID" value="ABZ93521.1"/>
    <property type="molecule type" value="Genomic_DNA"/>
</dbReference>
<dbReference type="RefSeq" id="WP_012388033.1">
    <property type="nucleotide sequence ID" value="NC_010842.1"/>
</dbReference>
<dbReference type="SMR" id="B0SEH8"/>
<dbReference type="KEGG" id="lbf:LBF_0994"/>
<dbReference type="HOGENOM" id="CLU_051433_0_0_12"/>
<dbReference type="UniPathway" id="UPA00034">
    <property type="reaction ID" value="UER00466"/>
</dbReference>
<dbReference type="GO" id="GO:0010285">
    <property type="term" value="F:L,L-diaminopimelate aminotransferase activity"/>
    <property type="evidence" value="ECO:0007669"/>
    <property type="project" value="UniProtKB-UniRule"/>
</dbReference>
<dbReference type="GO" id="GO:0030170">
    <property type="term" value="F:pyridoxal phosphate binding"/>
    <property type="evidence" value="ECO:0007669"/>
    <property type="project" value="UniProtKB-UniRule"/>
</dbReference>
<dbReference type="GO" id="GO:0033362">
    <property type="term" value="P:lysine biosynthetic process via diaminopimelate, diaminopimelate-aminotransferase pathway"/>
    <property type="evidence" value="ECO:0007669"/>
    <property type="project" value="UniProtKB-UniRule"/>
</dbReference>
<dbReference type="CDD" id="cd00609">
    <property type="entry name" value="AAT_like"/>
    <property type="match status" value="1"/>
</dbReference>
<dbReference type="FunFam" id="3.40.640.10:FF:000099">
    <property type="entry name" value="LL-diaminopimelate aminotransferase, chloroplastic"/>
    <property type="match status" value="1"/>
</dbReference>
<dbReference type="Gene3D" id="3.90.1150.10">
    <property type="entry name" value="Aspartate Aminotransferase, domain 1"/>
    <property type="match status" value="1"/>
</dbReference>
<dbReference type="Gene3D" id="3.40.640.10">
    <property type="entry name" value="Type I PLP-dependent aspartate aminotransferase-like (Major domain)"/>
    <property type="match status" value="1"/>
</dbReference>
<dbReference type="HAMAP" id="MF_01642">
    <property type="entry name" value="DapL_aminotrans_1"/>
    <property type="match status" value="1"/>
</dbReference>
<dbReference type="InterPro" id="IPR004839">
    <property type="entry name" value="Aminotransferase_I/II_large"/>
</dbReference>
<dbReference type="InterPro" id="IPR019942">
    <property type="entry name" value="DapL/ALD1"/>
</dbReference>
<dbReference type="InterPro" id="IPR015424">
    <property type="entry name" value="PyrdxlP-dep_Trfase"/>
</dbReference>
<dbReference type="InterPro" id="IPR015421">
    <property type="entry name" value="PyrdxlP-dep_Trfase_major"/>
</dbReference>
<dbReference type="InterPro" id="IPR015422">
    <property type="entry name" value="PyrdxlP-dep_Trfase_small"/>
</dbReference>
<dbReference type="NCBIfam" id="TIGR03542">
    <property type="entry name" value="DAPAT_plant"/>
    <property type="match status" value="1"/>
</dbReference>
<dbReference type="PANTHER" id="PTHR43144">
    <property type="entry name" value="AMINOTRANSFERASE"/>
    <property type="match status" value="1"/>
</dbReference>
<dbReference type="Pfam" id="PF00155">
    <property type="entry name" value="Aminotran_1_2"/>
    <property type="match status" value="1"/>
</dbReference>
<dbReference type="SUPFAM" id="SSF53383">
    <property type="entry name" value="PLP-dependent transferases"/>
    <property type="match status" value="1"/>
</dbReference>
<protein>
    <recommendedName>
        <fullName evidence="1">LL-diaminopimelate aminotransferase</fullName>
        <shortName evidence="1">DAP-AT</shortName>
        <shortName evidence="1">DAP-aminotransferase</shortName>
        <shortName evidence="1">LL-DAP-aminotransferase</shortName>
        <ecNumber evidence="1">2.6.1.83</ecNumber>
    </recommendedName>
</protein>
<proteinExistence type="inferred from homology"/>
<reference key="1">
    <citation type="journal article" date="2008" name="PLoS ONE">
        <title>Genome sequence of the saprophyte Leptospira biflexa provides insights into the evolution of Leptospira and the pathogenesis of leptospirosis.</title>
        <authorList>
            <person name="Picardeau M."/>
            <person name="Bulach D.M."/>
            <person name="Bouchier C."/>
            <person name="Zuerner R.L."/>
            <person name="Zidane N."/>
            <person name="Wilson P.J."/>
            <person name="Creno S."/>
            <person name="Kuczek E.S."/>
            <person name="Bommezzadri S."/>
            <person name="Davis J.C."/>
            <person name="McGrath A."/>
            <person name="Johnson M.J."/>
            <person name="Boursaux-Eude C."/>
            <person name="Seemann T."/>
            <person name="Rouy Z."/>
            <person name="Coppel R.L."/>
            <person name="Rood J.I."/>
            <person name="Lajus A."/>
            <person name="Davies J.K."/>
            <person name="Medigue C."/>
            <person name="Adler B."/>
        </authorList>
    </citation>
    <scope>NUCLEOTIDE SEQUENCE [LARGE SCALE GENOMIC DNA]</scope>
    <source>
        <strain>Patoc 1 / Ames</strain>
    </source>
</reference>